<comment type="function">
    <text evidence="4 7">Essential determinant for high-affinity spermidine transport. Required for the activation of the plasma membrane proton pump PMA1 via phosphorylation of 'Ser-899'.</text>
</comment>
<comment type="catalytic activity">
    <reaction>
        <text>L-seryl-[protein] + ATP = O-phospho-L-seryl-[protein] + ADP + H(+)</text>
        <dbReference type="Rhea" id="RHEA:17989"/>
        <dbReference type="Rhea" id="RHEA-COMP:9863"/>
        <dbReference type="Rhea" id="RHEA-COMP:11604"/>
        <dbReference type="ChEBI" id="CHEBI:15378"/>
        <dbReference type="ChEBI" id="CHEBI:29999"/>
        <dbReference type="ChEBI" id="CHEBI:30616"/>
        <dbReference type="ChEBI" id="CHEBI:83421"/>
        <dbReference type="ChEBI" id="CHEBI:456216"/>
        <dbReference type="EC" id="2.7.11.1"/>
    </reaction>
</comment>
<comment type="catalytic activity">
    <reaction>
        <text>L-threonyl-[protein] + ATP = O-phospho-L-threonyl-[protein] + ADP + H(+)</text>
        <dbReference type="Rhea" id="RHEA:46608"/>
        <dbReference type="Rhea" id="RHEA-COMP:11060"/>
        <dbReference type="Rhea" id="RHEA-COMP:11605"/>
        <dbReference type="ChEBI" id="CHEBI:15378"/>
        <dbReference type="ChEBI" id="CHEBI:30013"/>
        <dbReference type="ChEBI" id="CHEBI:30616"/>
        <dbReference type="ChEBI" id="CHEBI:61977"/>
        <dbReference type="ChEBI" id="CHEBI:456216"/>
        <dbReference type="EC" id="2.7.11.1"/>
    </reaction>
</comment>
<comment type="subcellular location">
    <subcellularLocation>
        <location evidence="5">Nucleus</location>
    </subcellularLocation>
    <subcellularLocation>
        <location evidence="5">Cytoplasm</location>
    </subcellularLocation>
</comment>
<comment type="miscellaneous">
    <text evidence="6">Present with 1420 molecules/cell in log phase SD medium.</text>
</comment>
<comment type="similarity">
    <text evidence="1">Belongs to the protein kinase superfamily. Ser/Thr protein kinase family.</text>
</comment>
<gene>
    <name type="primary">PTK2</name>
    <name type="synonym">STK2</name>
    <name type="ordered locus">YJR059W</name>
    <name type="ORF">J1725</name>
</gene>
<reference key="1">
    <citation type="journal article" date="1996" name="Biochem. Biophys. Res. Commun.">
        <title>A second gene encoding a putative serine/threonine protein kinase which enhances spermine uptake in Saccharomyces cerevisiae.</title>
        <authorList>
            <person name="Nozaki T."/>
            <person name="Nishimura K."/>
            <person name="Michael A.J."/>
            <person name="Maruyama T."/>
            <person name="Kakinuma Y."/>
            <person name="Igarashi K."/>
        </authorList>
    </citation>
    <scope>NUCLEOTIDE SEQUENCE [GENOMIC DNA]</scope>
</reference>
<reference key="2">
    <citation type="journal article" date="1996" name="Yeast">
        <title>Analysis of a 62 kb DNA sequence of chromosome X reveals 36 open reading frames and a gene cluster with a counterpart on chromosome XI.</title>
        <authorList>
            <person name="Huang M.-E."/>
            <person name="Manus V."/>
            <person name="Chuat J.-C."/>
            <person name="Galibert F."/>
        </authorList>
    </citation>
    <scope>NUCLEOTIDE SEQUENCE [GENOMIC DNA]</scope>
    <source>
        <strain>ATCC 204508 / S288c</strain>
    </source>
</reference>
<reference key="3">
    <citation type="journal article" date="1996" name="EMBO J.">
        <title>Complete nucleotide sequence of Saccharomyces cerevisiae chromosome X.</title>
        <authorList>
            <person name="Galibert F."/>
            <person name="Alexandraki D."/>
            <person name="Baur A."/>
            <person name="Boles E."/>
            <person name="Chalwatzis N."/>
            <person name="Chuat J.-C."/>
            <person name="Coster F."/>
            <person name="Cziepluch C."/>
            <person name="de Haan M."/>
            <person name="Domdey H."/>
            <person name="Durand P."/>
            <person name="Entian K.-D."/>
            <person name="Gatius M."/>
            <person name="Goffeau A."/>
            <person name="Grivell L.A."/>
            <person name="Hennemann A."/>
            <person name="Herbert C.J."/>
            <person name="Heumann K."/>
            <person name="Hilger F."/>
            <person name="Hollenberg C.P."/>
            <person name="Huang M.-E."/>
            <person name="Jacq C."/>
            <person name="Jauniaux J.-C."/>
            <person name="Katsoulou C."/>
            <person name="Kirchrath L."/>
            <person name="Kleine K."/>
            <person name="Kordes E."/>
            <person name="Koetter P."/>
            <person name="Liebl S."/>
            <person name="Louis E.J."/>
            <person name="Manus V."/>
            <person name="Mewes H.-W."/>
            <person name="Miosga T."/>
            <person name="Obermaier B."/>
            <person name="Perea J."/>
            <person name="Pohl T.M."/>
            <person name="Portetelle D."/>
            <person name="Pujol A."/>
            <person name="Purnelle B."/>
            <person name="Ramezani Rad M."/>
            <person name="Rasmussen S.W."/>
            <person name="Rose M."/>
            <person name="Rossau R."/>
            <person name="Schaaff-Gerstenschlaeger I."/>
            <person name="Smits P.H.M."/>
            <person name="Scarcez T."/>
            <person name="Soriano N."/>
            <person name="To Van D."/>
            <person name="Tzermia M."/>
            <person name="Van Broekhoven A."/>
            <person name="Vandenbol M."/>
            <person name="Wedler H."/>
            <person name="von Wettstein D."/>
            <person name="Wambutt R."/>
            <person name="Zagulski M."/>
            <person name="Zollner A."/>
            <person name="Karpfinger-Hartl L."/>
        </authorList>
    </citation>
    <scope>NUCLEOTIDE SEQUENCE [LARGE SCALE GENOMIC DNA]</scope>
    <source>
        <strain>ATCC 204508 / S288c</strain>
    </source>
</reference>
<reference key="4">
    <citation type="journal article" date="2014" name="G3 (Bethesda)">
        <title>The reference genome sequence of Saccharomyces cerevisiae: Then and now.</title>
        <authorList>
            <person name="Engel S.R."/>
            <person name="Dietrich F.S."/>
            <person name="Fisk D.G."/>
            <person name="Binkley G."/>
            <person name="Balakrishnan R."/>
            <person name="Costanzo M.C."/>
            <person name="Dwight S.S."/>
            <person name="Hitz B.C."/>
            <person name="Karra K."/>
            <person name="Nash R.S."/>
            <person name="Weng S."/>
            <person name="Wong E.D."/>
            <person name="Lloyd P."/>
            <person name="Skrzypek M.S."/>
            <person name="Miyasato S.R."/>
            <person name="Simison M."/>
            <person name="Cherry J.M."/>
        </authorList>
    </citation>
    <scope>GENOME REANNOTATION</scope>
    <source>
        <strain>ATCC 204508 / S288c</strain>
    </source>
</reference>
<reference key="5">
    <citation type="journal article" date="2007" name="Genome Res.">
        <title>Approaching a complete repository of sequence-verified protein-encoding clones for Saccharomyces cerevisiae.</title>
        <authorList>
            <person name="Hu Y."/>
            <person name="Rolfs A."/>
            <person name="Bhullar B."/>
            <person name="Murthy T.V.S."/>
            <person name="Zhu C."/>
            <person name="Berger M.F."/>
            <person name="Camargo A.A."/>
            <person name="Kelley F."/>
            <person name="McCarron S."/>
            <person name="Jepson D."/>
            <person name="Richardson A."/>
            <person name="Raphael J."/>
            <person name="Moreira D."/>
            <person name="Taycher E."/>
            <person name="Zuo D."/>
            <person name="Mohr S."/>
            <person name="Kane M.F."/>
            <person name="Williamson J."/>
            <person name="Simpson A.J.G."/>
            <person name="Bulyk M.L."/>
            <person name="Harlow E."/>
            <person name="Marsischky G."/>
            <person name="Kolodner R.D."/>
            <person name="LaBaer J."/>
        </authorList>
    </citation>
    <scope>NUCLEOTIDE SEQUENCE [GENOMIC DNA]</scope>
    <source>
        <strain>ATCC 204508 / S288c</strain>
    </source>
</reference>
<reference key="6">
    <citation type="journal article" date="1997" name="Mol. Cell. Biol.">
        <title>The STK2 gene, which encodes a putative Ser/Thr protein kinase, is required for high-affinity spermidine transport in Saccharomyces cerevisiae.</title>
        <authorList>
            <person name="Kaouass M."/>
            <person name="Audette M."/>
            <person name="Ramotar D."/>
            <person name="Verma S."/>
            <person name="de Montigny D."/>
            <person name="Gamache I."/>
            <person name="Torossian K."/>
            <person name="Poulin R."/>
        </authorList>
    </citation>
    <scope>FUNCTION</scope>
</reference>
<reference key="7">
    <citation type="journal article" date="2000" name="Mol. Cell. Biol.">
        <title>Regulation of yeast H(+)-ATPase by protein kinases belonging to a family dedicated to activation of plasma membrane transporters.</title>
        <authorList>
            <person name="Goossens A."/>
            <person name="de La Fuente N."/>
            <person name="Forment J."/>
            <person name="Serrano R."/>
            <person name="Portillo F."/>
        </authorList>
    </citation>
    <scope>FUNCTION</scope>
</reference>
<reference key="8">
    <citation type="journal article" date="2003" name="Nature">
        <title>Global analysis of protein localization in budding yeast.</title>
        <authorList>
            <person name="Huh W.-K."/>
            <person name="Falvo J.V."/>
            <person name="Gerke L.C."/>
            <person name="Carroll A.S."/>
            <person name="Howson R.W."/>
            <person name="Weissman J.S."/>
            <person name="O'Shea E.K."/>
        </authorList>
    </citation>
    <scope>SUBCELLULAR LOCATION [LARGE SCALE ANALYSIS]</scope>
</reference>
<reference key="9">
    <citation type="journal article" date="2003" name="Nature">
        <title>Global analysis of protein expression in yeast.</title>
        <authorList>
            <person name="Ghaemmaghami S."/>
            <person name="Huh W.-K."/>
            <person name="Bower K."/>
            <person name="Howson R.W."/>
            <person name="Belle A."/>
            <person name="Dephoure N."/>
            <person name="O'Shea E.K."/>
            <person name="Weissman J.S."/>
        </authorList>
    </citation>
    <scope>LEVEL OF PROTEIN EXPRESSION [LARGE SCALE ANALYSIS]</scope>
</reference>
<reference key="10">
    <citation type="journal article" date="2007" name="J. Proteome Res.">
        <title>Large-scale phosphorylation analysis of alpha-factor-arrested Saccharomyces cerevisiae.</title>
        <authorList>
            <person name="Li X."/>
            <person name="Gerber S.A."/>
            <person name="Rudner A.D."/>
            <person name="Beausoleil S.A."/>
            <person name="Haas W."/>
            <person name="Villen J."/>
            <person name="Elias J.E."/>
            <person name="Gygi S.P."/>
        </authorList>
    </citation>
    <scope>PHOSPHORYLATION [LARGE SCALE ANALYSIS] AT THR-56; SER-711; THR-737; SER-752 AND SER-755</scope>
    <scope>IDENTIFICATION BY MASS SPECTROMETRY [LARGE SCALE ANALYSIS]</scope>
    <source>
        <strain>ADR376</strain>
    </source>
</reference>
<reference key="11">
    <citation type="journal article" date="2007" name="Proc. Natl. Acad. Sci. U.S.A.">
        <title>Analysis of phosphorylation sites on proteins from Saccharomyces cerevisiae by electron transfer dissociation (ETD) mass spectrometry.</title>
        <authorList>
            <person name="Chi A."/>
            <person name="Huttenhower C."/>
            <person name="Geer L.Y."/>
            <person name="Coon J.J."/>
            <person name="Syka J.E.P."/>
            <person name="Bai D.L."/>
            <person name="Shabanowitz J."/>
            <person name="Burke D.J."/>
            <person name="Troyanskaya O.G."/>
            <person name="Hunt D.F."/>
        </authorList>
    </citation>
    <scope>PHOSPHORYLATION [LARGE SCALE ANALYSIS] AT SER-80</scope>
    <scope>IDENTIFICATION BY MASS SPECTROMETRY [LARGE SCALE ANALYSIS]</scope>
</reference>
<reference key="12">
    <citation type="journal article" date="2008" name="Mol. Cell. Proteomics">
        <title>A multidimensional chromatography technology for in-depth phosphoproteome analysis.</title>
        <authorList>
            <person name="Albuquerque C.P."/>
            <person name="Smolka M.B."/>
            <person name="Payne S.H."/>
            <person name="Bafna V."/>
            <person name="Eng J."/>
            <person name="Zhou H."/>
        </authorList>
    </citation>
    <scope>PHOSPHORYLATION [LARGE SCALE ANALYSIS] AT SER-623; SER-711; SER-778 AND SER-781</scope>
    <scope>IDENTIFICATION BY MASS SPECTROMETRY [LARGE SCALE ANALYSIS]</scope>
</reference>
<reference key="13">
    <citation type="journal article" date="2009" name="Science">
        <title>Global analysis of Cdk1 substrate phosphorylation sites provides insights into evolution.</title>
        <authorList>
            <person name="Holt L.J."/>
            <person name="Tuch B.B."/>
            <person name="Villen J."/>
            <person name="Johnson A.D."/>
            <person name="Gygi S.P."/>
            <person name="Morgan D.O."/>
        </authorList>
    </citation>
    <scope>PHOSPHORYLATION [LARGE SCALE ANALYSIS] AT THR-56; SER-59; SER-623; SER-632; SER-694; THR-700; SER-711; SER-752 AND SER-755</scope>
    <scope>IDENTIFICATION BY MASS SPECTROMETRY [LARGE SCALE ANALYSIS]</scope>
</reference>
<dbReference type="EC" id="2.7.11.1"/>
<dbReference type="EMBL" id="D87274">
    <property type="protein sequence ID" value="BAA13325.1"/>
    <property type="molecule type" value="Genomic_DNA"/>
</dbReference>
<dbReference type="EMBL" id="Z49559">
    <property type="protein sequence ID" value="CAA89587.1"/>
    <property type="molecule type" value="Genomic_DNA"/>
</dbReference>
<dbReference type="EMBL" id="L47993">
    <property type="protein sequence ID" value="AAB39285.1"/>
    <property type="molecule type" value="Genomic_DNA"/>
</dbReference>
<dbReference type="EMBL" id="AY723837">
    <property type="protein sequence ID" value="AAU09754.1"/>
    <property type="molecule type" value="Genomic_DNA"/>
</dbReference>
<dbReference type="EMBL" id="BK006943">
    <property type="protein sequence ID" value="DAA08846.1"/>
    <property type="molecule type" value="Genomic_DNA"/>
</dbReference>
<dbReference type="PIR" id="S57078">
    <property type="entry name" value="S57078"/>
</dbReference>
<dbReference type="RefSeq" id="NP_012593.3">
    <property type="nucleotide sequence ID" value="NM_001181717.3"/>
</dbReference>
<dbReference type="SMR" id="P47116"/>
<dbReference type="BioGRID" id="33816">
    <property type="interactions" value="731"/>
</dbReference>
<dbReference type="DIP" id="DIP-7167N"/>
<dbReference type="FunCoup" id="P47116">
    <property type="interactions" value="316"/>
</dbReference>
<dbReference type="IntAct" id="P47116">
    <property type="interactions" value="15"/>
</dbReference>
<dbReference type="MINT" id="P47116"/>
<dbReference type="STRING" id="4932.YJR059W"/>
<dbReference type="GlyGen" id="P47116">
    <property type="glycosylation" value="5 sites, 1 O-linked glycan (5 sites)"/>
</dbReference>
<dbReference type="iPTMnet" id="P47116"/>
<dbReference type="PaxDb" id="4932-YJR059W"/>
<dbReference type="PeptideAtlas" id="P47116"/>
<dbReference type="TopDownProteomics" id="P47116"/>
<dbReference type="EnsemblFungi" id="YJR059W_mRNA">
    <property type="protein sequence ID" value="YJR059W"/>
    <property type="gene ID" value="YJR059W"/>
</dbReference>
<dbReference type="GeneID" id="853522"/>
<dbReference type="KEGG" id="sce:YJR059W"/>
<dbReference type="AGR" id="SGD:S000003820"/>
<dbReference type="SGD" id="S000003820">
    <property type="gene designation" value="PTK2"/>
</dbReference>
<dbReference type="VEuPathDB" id="FungiDB:YJR059W"/>
<dbReference type="eggNOG" id="KOG0583">
    <property type="taxonomic scope" value="Eukaryota"/>
</dbReference>
<dbReference type="GeneTree" id="ENSGT00940000176810"/>
<dbReference type="HOGENOM" id="CLU_009275_1_1_1"/>
<dbReference type="InParanoid" id="P47116"/>
<dbReference type="OMA" id="IDSCNTD"/>
<dbReference type="OrthoDB" id="4062651at2759"/>
<dbReference type="BioCyc" id="YEAST:G3O-31692-MONOMER"/>
<dbReference type="BRENDA" id="2.7.11.1">
    <property type="organism ID" value="984"/>
</dbReference>
<dbReference type="BioGRID-ORCS" id="853522">
    <property type="hits" value="3 hits in 13 CRISPR screens"/>
</dbReference>
<dbReference type="PRO" id="PR:P47116"/>
<dbReference type="Proteomes" id="UP000002311">
    <property type="component" value="Chromosome X"/>
</dbReference>
<dbReference type="RNAct" id="P47116">
    <property type="molecule type" value="protein"/>
</dbReference>
<dbReference type="GO" id="GO:0005737">
    <property type="term" value="C:cytoplasm"/>
    <property type="evidence" value="ECO:0000314"/>
    <property type="project" value="SGD"/>
</dbReference>
<dbReference type="GO" id="GO:0005634">
    <property type="term" value="C:nucleus"/>
    <property type="evidence" value="ECO:0000314"/>
    <property type="project" value="SGD"/>
</dbReference>
<dbReference type="GO" id="GO:0005886">
    <property type="term" value="C:plasma membrane"/>
    <property type="evidence" value="ECO:0000314"/>
    <property type="project" value="SGD"/>
</dbReference>
<dbReference type="GO" id="GO:0005524">
    <property type="term" value="F:ATP binding"/>
    <property type="evidence" value="ECO:0007669"/>
    <property type="project" value="UniProtKB-KW"/>
</dbReference>
<dbReference type="GO" id="GO:0004672">
    <property type="term" value="F:protein kinase activity"/>
    <property type="evidence" value="ECO:0000314"/>
    <property type="project" value="SGD"/>
</dbReference>
<dbReference type="GO" id="GO:0106310">
    <property type="term" value="F:protein serine kinase activity"/>
    <property type="evidence" value="ECO:0007669"/>
    <property type="project" value="RHEA"/>
</dbReference>
<dbReference type="GO" id="GO:0004674">
    <property type="term" value="F:protein serine/threonine kinase activity"/>
    <property type="evidence" value="ECO:0000318"/>
    <property type="project" value="GO_Central"/>
</dbReference>
<dbReference type="GO" id="GO:0000082">
    <property type="term" value="P:G1/S transition of mitotic cell cycle"/>
    <property type="evidence" value="ECO:0000316"/>
    <property type="project" value="SGD"/>
</dbReference>
<dbReference type="GO" id="GO:0000086">
    <property type="term" value="P:G2/M transition of mitotic cell cycle"/>
    <property type="evidence" value="ECO:0000318"/>
    <property type="project" value="GO_Central"/>
</dbReference>
<dbReference type="GO" id="GO:0006873">
    <property type="term" value="P:intracellular monoatomic ion homeostasis"/>
    <property type="evidence" value="ECO:0000315"/>
    <property type="project" value="SGD"/>
</dbReference>
<dbReference type="GO" id="GO:0015847">
    <property type="term" value="P:putrescine transport"/>
    <property type="evidence" value="ECO:0000315"/>
    <property type="project" value="SGD"/>
</dbReference>
<dbReference type="GO" id="GO:0008361">
    <property type="term" value="P:regulation of cell size"/>
    <property type="evidence" value="ECO:0007001"/>
    <property type="project" value="SGD"/>
</dbReference>
<dbReference type="GO" id="GO:0015848">
    <property type="term" value="P:spermidine transport"/>
    <property type="evidence" value="ECO:0000315"/>
    <property type="project" value="SGD"/>
</dbReference>
<dbReference type="GO" id="GO:0000296">
    <property type="term" value="P:spermine transport"/>
    <property type="evidence" value="ECO:0000315"/>
    <property type="project" value="SGD"/>
</dbReference>
<dbReference type="CDD" id="cd13994">
    <property type="entry name" value="STKc_HAL4_like"/>
    <property type="match status" value="1"/>
</dbReference>
<dbReference type="FunFam" id="1.10.510.10:FF:001042">
    <property type="entry name" value="Ptk2p"/>
    <property type="match status" value="1"/>
</dbReference>
<dbReference type="Gene3D" id="1.10.510.10">
    <property type="entry name" value="Transferase(Phosphotransferase) domain 1"/>
    <property type="match status" value="1"/>
</dbReference>
<dbReference type="InterPro" id="IPR011009">
    <property type="entry name" value="Kinase-like_dom_sf"/>
</dbReference>
<dbReference type="InterPro" id="IPR000719">
    <property type="entry name" value="Prot_kinase_dom"/>
</dbReference>
<dbReference type="InterPro" id="IPR017441">
    <property type="entry name" value="Protein_kinase_ATP_BS"/>
</dbReference>
<dbReference type="InterPro" id="IPR008271">
    <property type="entry name" value="Ser/Thr_kinase_AS"/>
</dbReference>
<dbReference type="PANTHER" id="PTHR44167">
    <property type="entry name" value="OVARIAN-SPECIFIC SERINE/THREONINE-PROTEIN KINASE LOK-RELATED"/>
    <property type="match status" value="1"/>
</dbReference>
<dbReference type="PANTHER" id="PTHR44167:SF30">
    <property type="entry name" value="PHOSPHORYLASE KINASE"/>
    <property type="match status" value="1"/>
</dbReference>
<dbReference type="Pfam" id="PF00069">
    <property type="entry name" value="Pkinase"/>
    <property type="match status" value="1"/>
</dbReference>
<dbReference type="SMART" id="SM00220">
    <property type="entry name" value="S_TKc"/>
    <property type="match status" value="1"/>
</dbReference>
<dbReference type="SUPFAM" id="SSF56112">
    <property type="entry name" value="Protein kinase-like (PK-like)"/>
    <property type="match status" value="1"/>
</dbReference>
<dbReference type="PROSITE" id="PS00107">
    <property type="entry name" value="PROTEIN_KINASE_ATP"/>
    <property type="match status" value="1"/>
</dbReference>
<dbReference type="PROSITE" id="PS50011">
    <property type="entry name" value="PROTEIN_KINASE_DOM"/>
    <property type="match status" value="1"/>
</dbReference>
<dbReference type="PROSITE" id="PS00108">
    <property type="entry name" value="PROTEIN_KINASE_ST"/>
    <property type="match status" value="1"/>
</dbReference>
<proteinExistence type="evidence at protein level"/>
<accession>P47116</accession>
<accession>D6VWN0</accession>
<accession>E9P962</accession>
<keyword id="KW-0067">ATP-binding</keyword>
<keyword id="KW-0963">Cytoplasm</keyword>
<keyword id="KW-0418">Kinase</keyword>
<keyword id="KW-0547">Nucleotide-binding</keyword>
<keyword id="KW-0539">Nucleus</keyword>
<keyword id="KW-0597">Phosphoprotein</keyword>
<keyword id="KW-1185">Reference proteome</keyword>
<keyword id="KW-0723">Serine/threonine-protein kinase</keyword>
<keyword id="KW-0808">Transferase</keyword>
<evidence type="ECO:0000255" key="1">
    <source>
        <dbReference type="PROSITE-ProRule" id="PRU00159"/>
    </source>
</evidence>
<evidence type="ECO:0000255" key="2">
    <source>
        <dbReference type="PROSITE-ProRule" id="PRU10027"/>
    </source>
</evidence>
<evidence type="ECO:0000256" key="3">
    <source>
        <dbReference type="SAM" id="MobiDB-lite"/>
    </source>
</evidence>
<evidence type="ECO:0000269" key="4">
    <source>
    </source>
</evidence>
<evidence type="ECO:0000269" key="5">
    <source>
    </source>
</evidence>
<evidence type="ECO:0000269" key="6">
    <source>
    </source>
</evidence>
<evidence type="ECO:0000269" key="7">
    <source>
    </source>
</evidence>
<evidence type="ECO:0000305" key="8"/>
<evidence type="ECO:0007744" key="9">
    <source>
    </source>
</evidence>
<evidence type="ECO:0007744" key="10">
    <source>
    </source>
</evidence>
<evidence type="ECO:0007744" key="11">
    <source>
    </source>
</evidence>
<evidence type="ECO:0007744" key="12">
    <source>
    </source>
</evidence>
<feature type="chain" id="PRO_0000086591" description="Serine/threonine-protein kinase PTK2/STK2">
    <location>
        <begin position="1"/>
        <end position="818"/>
    </location>
</feature>
<feature type="domain" description="Protein kinase" evidence="1">
    <location>
        <begin position="255"/>
        <end position="562"/>
    </location>
</feature>
<feature type="region of interest" description="Disordered" evidence="3">
    <location>
        <begin position="28"/>
        <end position="100"/>
    </location>
</feature>
<feature type="region of interest" description="Disordered" evidence="3">
    <location>
        <begin position="117"/>
        <end position="177"/>
    </location>
</feature>
<feature type="region of interest" description="Disordered" evidence="3">
    <location>
        <begin position="585"/>
        <end position="795"/>
    </location>
</feature>
<feature type="compositionally biased region" description="Polar residues" evidence="3">
    <location>
        <begin position="28"/>
        <end position="39"/>
    </location>
</feature>
<feature type="compositionally biased region" description="Low complexity" evidence="3">
    <location>
        <begin position="57"/>
        <end position="81"/>
    </location>
</feature>
<feature type="compositionally biased region" description="Basic and acidic residues" evidence="3">
    <location>
        <begin position="136"/>
        <end position="160"/>
    </location>
</feature>
<feature type="compositionally biased region" description="Polar residues" evidence="3">
    <location>
        <begin position="585"/>
        <end position="595"/>
    </location>
</feature>
<feature type="compositionally biased region" description="Basic and acidic residues" evidence="3">
    <location>
        <begin position="638"/>
        <end position="651"/>
    </location>
</feature>
<feature type="compositionally biased region" description="Basic and acidic residues" evidence="3">
    <location>
        <begin position="659"/>
        <end position="685"/>
    </location>
</feature>
<feature type="compositionally biased region" description="Low complexity" evidence="3">
    <location>
        <begin position="727"/>
        <end position="736"/>
    </location>
</feature>
<feature type="compositionally biased region" description="Polar residues" evidence="3">
    <location>
        <begin position="755"/>
        <end position="767"/>
    </location>
</feature>
<feature type="compositionally biased region" description="Low complexity" evidence="3">
    <location>
        <begin position="768"/>
        <end position="789"/>
    </location>
</feature>
<feature type="active site" description="Proton acceptor" evidence="1 2">
    <location>
        <position position="388"/>
    </location>
</feature>
<feature type="binding site" evidence="1">
    <location>
        <begin position="261"/>
        <end position="269"/>
    </location>
    <ligand>
        <name>ATP</name>
        <dbReference type="ChEBI" id="CHEBI:30616"/>
    </ligand>
</feature>
<feature type="binding site" evidence="1">
    <location>
        <position position="285"/>
    </location>
    <ligand>
        <name>ATP</name>
        <dbReference type="ChEBI" id="CHEBI:30616"/>
    </ligand>
</feature>
<feature type="modified residue" description="Phosphothreonine" evidence="10 12">
    <location>
        <position position="56"/>
    </location>
</feature>
<feature type="modified residue" description="Phosphoserine" evidence="12">
    <location>
        <position position="59"/>
    </location>
</feature>
<feature type="modified residue" description="Phosphoserine" evidence="9">
    <location>
        <position position="80"/>
    </location>
</feature>
<feature type="modified residue" description="Phosphoserine" evidence="11 12">
    <location>
        <position position="623"/>
    </location>
</feature>
<feature type="modified residue" description="Phosphoserine" evidence="12">
    <location>
        <position position="632"/>
    </location>
</feature>
<feature type="modified residue" description="Phosphoserine" evidence="12">
    <location>
        <position position="694"/>
    </location>
</feature>
<feature type="modified residue" description="Phosphothreonine" evidence="12">
    <location>
        <position position="700"/>
    </location>
</feature>
<feature type="modified residue" description="Phosphoserine" evidence="10 11 12">
    <location>
        <position position="711"/>
    </location>
</feature>
<feature type="modified residue" description="Phosphothreonine" evidence="10">
    <location>
        <position position="737"/>
    </location>
</feature>
<feature type="modified residue" description="Phosphoserine" evidence="10 12">
    <location>
        <position position="752"/>
    </location>
</feature>
<feature type="modified residue" description="Phosphoserine" evidence="10 12">
    <location>
        <position position="755"/>
    </location>
</feature>
<feature type="modified residue" description="Phosphoserine" evidence="11">
    <location>
        <position position="778"/>
    </location>
</feature>
<feature type="modified residue" description="Phosphoserine" evidence="11">
    <location>
        <position position="781"/>
    </location>
</feature>
<feature type="sequence conflict" description="In Ref. 5; AAU09754." evidence="8" ref="5">
    <original>D</original>
    <variation>G</variation>
    <location>
        <position position="801"/>
    </location>
</feature>
<organism>
    <name type="scientific">Saccharomyces cerevisiae (strain ATCC 204508 / S288c)</name>
    <name type="common">Baker's yeast</name>
    <dbReference type="NCBI Taxonomy" id="559292"/>
    <lineage>
        <taxon>Eukaryota</taxon>
        <taxon>Fungi</taxon>
        <taxon>Dikarya</taxon>
        <taxon>Ascomycota</taxon>
        <taxon>Saccharomycotina</taxon>
        <taxon>Saccharomycetes</taxon>
        <taxon>Saccharomycetales</taxon>
        <taxon>Saccharomycetaceae</taxon>
        <taxon>Saccharomyces</taxon>
    </lineage>
</organism>
<name>PTK2_YEAST</name>
<sequence length="818" mass="91400">MAGNGKDKEVDKSPSVSTLKLLGKRLFNSSSHTDNSSLLLSAEQLGNGRSLRKRPTSPSISGSGSGGNSPSSSAGARQRSASLHRRKNNASVGFSNGSVSSHKSSVALQDLIKHNNNPYLNSPSDILGTGTGIASTRDRDRAVLDREKEKERARNKERNTHHAGLPQRSNSMASHHFPNENIVYNPYGISPNHARPDTAFADTLNTNKENDLSFYMHDGNSKIRMLPLPIANPNDFLPEDMKQYSVHLTDNFVFDTDNKPIGSGGSSEVRKVKSSYRQKDVYALKKLNMIYHESPEKFYKRCSKEFIIAKHLSHNVHITNTFYLLKVPTTTYTTRGWGFIMELGVKDLFQLMERTGWKNVPFNEKYCLFKQVAQGIKFCHDNGIAHRDLKPENVLISKEGICKLTDFGISDWYHVIPHDYTSPVKTCQGMIGSPPYTPPEVMYFDAKKHYPEKFQKPYNPLAMDSYALGIMLITMINNIIPFIDSCNTDARFREFEVSYDNFINHQNPHFRDKGCHKPGPGSEYSLARNFKNTDATRIAWRLADPNPATRYTMDDLFNDPFFQQIETCVEPNDDDLVRVPELRKSTSTNDFSENSLDAPHDQEVIHTSNPFLKKETLTSKPRSMLEIAESPSLKQKSKVKDSAKTKTHDVGDEGGNESTKPKQQDKKENLKKDEVKNGDKDKVIEEATTTNVDSILEKPTPTSTKVEDNLSEDDSTMKELKSMLNSTPTTPTHNGPTPLPAKAGTQLDKRMSDLSLKSETPASTKNFSAPNVSSSSNSLRSLGSPSVSSSKKKKVIHHHLDITNSVTNMSSVSAFISR</sequence>
<protein>
    <recommendedName>
        <fullName>Serine/threonine-protein kinase PTK2/STK2</fullName>
        <ecNumber>2.7.11.1</ecNumber>
    </recommendedName>
</protein>